<proteinExistence type="inferred from homology"/>
<organism>
    <name type="scientific">Hamiltonella defensa subsp. Acyrthosiphon pisum (strain 5AT)</name>
    <dbReference type="NCBI Taxonomy" id="572265"/>
    <lineage>
        <taxon>Bacteria</taxon>
        <taxon>Pseudomonadati</taxon>
        <taxon>Pseudomonadota</taxon>
        <taxon>Gammaproteobacteria</taxon>
        <taxon>Enterobacterales</taxon>
        <taxon>Enterobacteriaceae</taxon>
        <taxon>aphid secondary symbionts</taxon>
        <taxon>Candidatus Hamiltonella</taxon>
    </lineage>
</organism>
<feature type="chain" id="PRO_1000204554" description="Large ribosomal subunit protein bL36">
    <location>
        <begin position="1"/>
        <end position="38"/>
    </location>
</feature>
<sequence length="38" mass="4462">MKVRASVKKMCRNCKIIKRHGVVRIICSDEPKHKQRQG</sequence>
<gene>
    <name evidence="1" type="primary">rpmJ</name>
    <name type="ordered locus">HDEF_1845</name>
</gene>
<reference key="1">
    <citation type="journal article" date="2009" name="Proc. Natl. Acad. Sci. U.S.A.">
        <title>Hamiltonella defensa, genome evolution of protective bacterial endosymbiont from pathogenic ancestors.</title>
        <authorList>
            <person name="Degnan P.H."/>
            <person name="Yu Y."/>
            <person name="Sisneros N."/>
            <person name="Wing R.A."/>
            <person name="Moran N.A."/>
        </authorList>
    </citation>
    <scope>NUCLEOTIDE SEQUENCE [LARGE SCALE GENOMIC DNA]</scope>
    <source>
        <strain>5AT</strain>
    </source>
</reference>
<comment type="similarity">
    <text evidence="1">Belongs to the bacterial ribosomal protein bL36 family.</text>
</comment>
<dbReference type="EMBL" id="CP001277">
    <property type="protein sequence ID" value="ACQ68440.1"/>
    <property type="molecule type" value="Genomic_DNA"/>
</dbReference>
<dbReference type="RefSeq" id="WP_015874204.1">
    <property type="nucleotide sequence ID" value="NC_012751.1"/>
</dbReference>
<dbReference type="SMR" id="C4K797"/>
<dbReference type="STRING" id="572265.HDEF_1845"/>
<dbReference type="GeneID" id="66261995"/>
<dbReference type="KEGG" id="hde:HDEF_1845"/>
<dbReference type="eggNOG" id="COG0257">
    <property type="taxonomic scope" value="Bacteria"/>
</dbReference>
<dbReference type="HOGENOM" id="CLU_135723_6_2_6"/>
<dbReference type="Proteomes" id="UP000002334">
    <property type="component" value="Chromosome"/>
</dbReference>
<dbReference type="GO" id="GO:0005737">
    <property type="term" value="C:cytoplasm"/>
    <property type="evidence" value="ECO:0007669"/>
    <property type="project" value="UniProtKB-ARBA"/>
</dbReference>
<dbReference type="GO" id="GO:1990904">
    <property type="term" value="C:ribonucleoprotein complex"/>
    <property type="evidence" value="ECO:0007669"/>
    <property type="project" value="UniProtKB-KW"/>
</dbReference>
<dbReference type="GO" id="GO:0005840">
    <property type="term" value="C:ribosome"/>
    <property type="evidence" value="ECO:0007669"/>
    <property type="project" value="UniProtKB-KW"/>
</dbReference>
<dbReference type="GO" id="GO:0003735">
    <property type="term" value="F:structural constituent of ribosome"/>
    <property type="evidence" value="ECO:0007669"/>
    <property type="project" value="InterPro"/>
</dbReference>
<dbReference type="GO" id="GO:0006412">
    <property type="term" value="P:translation"/>
    <property type="evidence" value="ECO:0007669"/>
    <property type="project" value="UniProtKB-UniRule"/>
</dbReference>
<dbReference type="HAMAP" id="MF_00251">
    <property type="entry name" value="Ribosomal_bL36"/>
    <property type="match status" value="1"/>
</dbReference>
<dbReference type="InterPro" id="IPR000473">
    <property type="entry name" value="Ribosomal_bL36"/>
</dbReference>
<dbReference type="InterPro" id="IPR035977">
    <property type="entry name" value="Ribosomal_bL36_sp"/>
</dbReference>
<dbReference type="NCBIfam" id="TIGR01022">
    <property type="entry name" value="rpmJ_bact"/>
    <property type="match status" value="1"/>
</dbReference>
<dbReference type="PANTHER" id="PTHR42888">
    <property type="entry name" value="50S RIBOSOMAL PROTEIN L36, CHLOROPLASTIC"/>
    <property type="match status" value="1"/>
</dbReference>
<dbReference type="PANTHER" id="PTHR42888:SF1">
    <property type="entry name" value="LARGE RIBOSOMAL SUBUNIT PROTEIN BL36C"/>
    <property type="match status" value="1"/>
</dbReference>
<dbReference type="Pfam" id="PF00444">
    <property type="entry name" value="Ribosomal_L36"/>
    <property type="match status" value="1"/>
</dbReference>
<dbReference type="SUPFAM" id="SSF57840">
    <property type="entry name" value="Ribosomal protein L36"/>
    <property type="match status" value="1"/>
</dbReference>
<dbReference type="PROSITE" id="PS00828">
    <property type="entry name" value="RIBOSOMAL_L36"/>
    <property type="match status" value="1"/>
</dbReference>
<accession>C4K797</accession>
<keyword id="KW-0687">Ribonucleoprotein</keyword>
<keyword id="KW-0689">Ribosomal protein</keyword>
<name>RL36_HAMD5</name>
<protein>
    <recommendedName>
        <fullName evidence="1">Large ribosomal subunit protein bL36</fullName>
    </recommendedName>
    <alternativeName>
        <fullName evidence="2">50S ribosomal protein L36</fullName>
    </alternativeName>
</protein>
<evidence type="ECO:0000255" key="1">
    <source>
        <dbReference type="HAMAP-Rule" id="MF_00251"/>
    </source>
</evidence>
<evidence type="ECO:0000305" key="2"/>